<dbReference type="EC" id="2.7.1.148" evidence="1"/>
<dbReference type="EMBL" id="CP000157">
    <property type="protein sequence ID" value="ABC63476.1"/>
    <property type="molecule type" value="Genomic_DNA"/>
</dbReference>
<dbReference type="RefSeq" id="WP_011414312.1">
    <property type="nucleotide sequence ID" value="NC_007722.1"/>
</dbReference>
<dbReference type="SMR" id="Q2NA15"/>
<dbReference type="STRING" id="314225.ELI_06920"/>
<dbReference type="KEGG" id="eli:ELI_06920"/>
<dbReference type="eggNOG" id="COG1947">
    <property type="taxonomic scope" value="Bacteria"/>
</dbReference>
<dbReference type="HOGENOM" id="CLU_053057_1_0_5"/>
<dbReference type="OrthoDB" id="9809438at2"/>
<dbReference type="UniPathway" id="UPA00056">
    <property type="reaction ID" value="UER00094"/>
</dbReference>
<dbReference type="Proteomes" id="UP000008808">
    <property type="component" value="Chromosome"/>
</dbReference>
<dbReference type="GO" id="GO:0050515">
    <property type="term" value="F:4-(cytidine 5'-diphospho)-2-C-methyl-D-erythritol kinase activity"/>
    <property type="evidence" value="ECO:0007669"/>
    <property type="project" value="UniProtKB-UniRule"/>
</dbReference>
<dbReference type="GO" id="GO:0005524">
    <property type="term" value="F:ATP binding"/>
    <property type="evidence" value="ECO:0007669"/>
    <property type="project" value="UniProtKB-UniRule"/>
</dbReference>
<dbReference type="GO" id="GO:0019288">
    <property type="term" value="P:isopentenyl diphosphate biosynthetic process, methylerythritol 4-phosphate pathway"/>
    <property type="evidence" value="ECO:0007669"/>
    <property type="project" value="UniProtKB-UniRule"/>
</dbReference>
<dbReference type="GO" id="GO:0016114">
    <property type="term" value="P:terpenoid biosynthetic process"/>
    <property type="evidence" value="ECO:0007669"/>
    <property type="project" value="InterPro"/>
</dbReference>
<dbReference type="Gene3D" id="3.30.230.10">
    <property type="match status" value="1"/>
</dbReference>
<dbReference type="Gene3D" id="3.30.70.890">
    <property type="entry name" value="GHMP kinase, C-terminal domain"/>
    <property type="match status" value="1"/>
</dbReference>
<dbReference type="HAMAP" id="MF_00061">
    <property type="entry name" value="IspE"/>
    <property type="match status" value="1"/>
</dbReference>
<dbReference type="InterPro" id="IPR013750">
    <property type="entry name" value="GHMP_kinase_C_dom"/>
</dbReference>
<dbReference type="InterPro" id="IPR036554">
    <property type="entry name" value="GHMP_kinase_C_sf"/>
</dbReference>
<dbReference type="InterPro" id="IPR006204">
    <property type="entry name" value="GHMP_kinase_N_dom"/>
</dbReference>
<dbReference type="InterPro" id="IPR004424">
    <property type="entry name" value="IspE"/>
</dbReference>
<dbReference type="InterPro" id="IPR020568">
    <property type="entry name" value="Ribosomal_Su5_D2-typ_SF"/>
</dbReference>
<dbReference type="InterPro" id="IPR014721">
    <property type="entry name" value="Ribsml_uS5_D2-typ_fold_subgr"/>
</dbReference>
<dbReference type="NCBIfam" id="NF011202">
    <property type="entry name" value="PRK14608.1"/>
    <property type="match status" value="1"/>
</dbReference>
<dbReference type="PANTHER" id="PTHR43527">
    <property type="entry name" value="4-DIPHOSPHOCYTIDYL-2-C-METHYL-D-ERYTHRITOL KINASE, CHLOROPLASTIC"/>
    <property type="match status" value="1"/>
</dbReference>
<dbReference type="PANTHER" id="PTHR43527:SF2">
    <property type="entry name" value="4-DIPHOSPHOCYTIDYL-2-C-METHYL-D-ERYTHRITOL KINASE, CHLOROPLASTIC"/>
    <property type="match status" value="1"/>
</dbReference>
<dbReference type="Pfam" id="PF08544">
    <property type="entry name" value="GHMP_kinases_C"/>
    <property type="match status" value="1"/>
</dbReference>
<dbReference type="Pfam" id="PF00288">
    <property type="entry name" value="GHMP_kinases_N"/>
    <property type="match status" value="1"/>
</dbReference>
<dbReference type="PIRSF" id="PIRSF010376">
    <property type="entry name" value="IspE"/>
    <property type="match status" value="1"/>
</dbReference>
<dbReference type="SUPFAM" id="SSF55060">
    <property type="entry name" value="GHMP Kinase, C-terminal domain"/>
    <property type="match status" value="1"/>
</dbReference>
<dbReference type="SUPFAM" id="SSF54211">
    <property type="entry name" value="Ribosomal protein S5 domain 2-like"/>
    <property type="match status" value="1"/>
</dbReference>
<evidence type="ECO:0000255" key="1">
    <source>
        <dbReference type="HAMAP-Rule" id="MF_00061"/>
    </source>
</evidence>
<organism>
    <name type="scientific">Erythrobacter litoralis (strain HTCC2594)</name>
    <dbReference type="NCBI Taxonomy" id="314225"/>
    <lineage>
        <taxon>Bacteria</taxon>
        <taxon>Pseudomonadati</taxon>
        <taxon>Pseudomonadota</taxon>
        <taxon>Alphaproteobacteria</taxon>
        <taxon>Sphingomonadales</taxon>
        <taxon>Erythrobacteraceae</taxon>
        <taxon>Erythrobacter/Porphyrobacter group</taxon>
        <taxon>Erythrobacter</taxon>
    </lineage>
</organism>
<feature type="chain" id="PRO_0000335713" description="4-diphosphocytidyl-2-C-methyl-D-erythritol kinase">
    <location>
        <begin position="1"/>
        <end position="273"/>
    </location>
</feature>
<feature type="active site" evidence="1">
    <location>
        <position position="9"/>
    </location>
</feature>
<feature type="active site" evidence="1">
    <location>
        <position position="129"/>
    </location>
</feature>
<feature type="binding site" evidence="1">
    <location>
        <begin position="90"/>
        <end position="100"/>
    </location>
    <ligand>
        <name>ATP</name>
        <dbReference type="ChEBI" id="CHEBI:30616"/>
    </ligand>
</feature>
<name>ISPE_ERYLH</name>
<proteinExistence type="inferred from homology"/>
<reference key="1">
    <citation type="journal article" date="2009" name="J. Bacteriol.">
        <title>Complete genome sequence of Erythrobacter litoralis HTCC2594.</title>
        <authorList>
            <person name="Oh H.M."/>
            <person name="Giovannoni S.J."/>
            <person name="Ferriera S."/>
            <person name="Johnson J."/>
            <person name="Cho J.C."/>
        </authorList>
    </citation>
    <scope>NUCLEOTIDE SEQUENCE [LARGE SCALE GENOMIC DNA]</scope>
    <source>
        <strain>HTCC2594</strain>
    </source>
</reference>
<gene>
    <name evidence="1" type="primary">ispE</name>
    <name type="ordered locus">ELI_06920</name>
</gene>
<keyword id="KW-0067">ATP-binding</keyword>
<keyword id="KW-0414">Isoprene biosynthesis</keyword>
<keyword id="KW-0418">Kinase</keyword>
<keyword id="KW-0547">Nucleotide-binding</keyword>
<keyword id="KW-1185">Reference proteome</keyword>
<keyword id="KW-0808">Transferase</keyword>
<sequence>MITETAYAKINLALHVRSKREDGYHEIETLFAFVDAGDVLVARAAEADRLETVGEFADVLDNPFDNLVARTMSTLPREGGLHVTLEKNLPVAAGLGGGSADAGAMFRIIEQMHGLPDDWEEKAIRLGADVPACVASEMAIGRGTGTDLEPVENDMAGMAVLLVNLRVPLPTGPVFKAWADTAGGEDLGPLPTGTAREIARKGRNDLRPPAVAICPPIADVLQALEATDPWMCEMSGSGATCFALYDETEMRDKAARAIAEHHPGWWQMTGTLQ</sequence>
<comment type="function">
    <text evidence="1">Catalyzes the phosphorylation of the position 2 hydroxy group of 4-diphosphocytidyl-2C-methyl-D-erythritol.</text>
</comment>
<comment type="catalytic activity">
    <reaction evidence="1">
        <text>4-CDP-2-C-methyl-D-erythritol + ATP = 4-CDP-2-C-methyl-D-erythritol 2-phosphate + ADP + H(+)</text>
        <dbReference type="Rhea" id="RHEA:18437"/>
        <dbReference type="ChEBI" id="CHEBI:15378"/>
        <dbReference type="ChEBI" id="CHEBI:30616"/>
        <dbReference type="ChEBI" id="CHEBI:57823"/>
        <dbReference type="ChEBI" id="CHEBI:57919"/>
        <dbReference type="ChEBI" id="CHEBI:456216"/>
        <dbReference type="EC" id="2.7.1.148"/>
    </reaction>
</comment>
<comment type="pathway">
    <text evidence="1">Isoprenoid biosynthesis; isopentenyl diphosphate biosynthesis via DXP pathway; isopentenyl diphosphate from 1-deoxy-D-xylulose 5-phosphate: step 3/6.</text>
</comment>
<comment type="similarity">
    <text evidence="1">Belongs to the GHMP kinase family. IspE subfamily.</text>
</comment>
<protein>
    <recommendedName>
        <fullName evidence="1">4-diphosphocytidyl-2-C-methyl-D-erythritol kinase</fullName>
        <shortName evidence="1">CMK</shortName>
        <ecNumber evidence="1">2.7.1.148</ecNumber>
    </recommendedName>
    <alternativeName>
        <fullName evidence="1">4-(cytidine-5'-diphospho)-2-C-methyl-D-erythritol kinase</fullName>
    </alternativeName>
</protein>
<accession>Q2NA15</accession>